<reference key="1">
    <citation type="submission" date="2008-05" db="EMBL/GenBank/DDBJ databases">
        <title>Complete sequence of Rhodopseudomonas palustris TIE-1.</title>
        <authorList>
            <consortium name="US DOE Joint Genome Institute"/>
            <person name="Lucas S."/>
            <person name="Copeland A."/>
            <person name="Lapidus A."/>
            <person name="Glavina del Rio T."/>
            <person name="Dalin E."/>
            <person name="Tice H."/>
            <person name="Pitluck S."/>
            <person name="Chain P."/>
            <person name="Malfatti S."/>
            <person name="Shin M."/>
            <person name="Vergez L."/>
            <person name="Lang D."/>
            <person name="Schmutz J."/>
            <person name="Larimer F."/>
            <person name="Land M."/>
            <person name="Hauser L."/>
            <person name="Kyrpides N."/>
            <person name="Mikhailova N."/>
            <person name="Emerson D."/>
            <person name="Newman D.K."/>
            <person name="Roden E."/>
            <person name="Richardson P."/>
        </authorList>
    </citation>
    <scope>NUCLEOTIDE SEQUENCE [LARGE SCALE GENOMIC DNA]</scope>
    <source>
        <strain>TIE-1</strain>
    </source>
</reference>
<accession>B3Q9Q2</accession>
<protein>
    <recommendedName>
        <fullName evidence="1">Protein nucleotidyltransferase YdiU</fullName>
        <ecNumber evidence="1">2.7.7.-</ecNumber>
    </recommendedName>
    <alternativeName>
        <fullName evidence="1">Protein adenylyltransferase YdiU</fullName>
        <ecNumber evidence="1">2.7.7.108</ecNumber>
    </alternativeName>
    <alternativeName>
        <fullName evidence="1">Protein uridylyltransferase YdiU</fullName>
        <ecNumber evidence="1">2.7.7.-</ecNumber>
    </alternativeName>
</protein>
<sequence>MTAHFPFDNSYVALPPNFFARVAPTPVAAPRLIKLNRPLAVQLGLDPDLLETPEGAEILSGNQMPETAASIAMAYAGHQFGNFVPQLGDGRAILLGEVVDRNGVRRDIQLKGAGRTPFSRMGDGRAALGPVLREYIVSEAMAALGIPTTRSLAAVLTGETVLRDPIQPGAVLTRVASSHIRVGTFQYFAARGDLASVRALADHAIARHYPEAAQAPSPYLALLEGVIGRQAELVASWMMVGFIHGVMNTDNCSVAGETIDYGPCAFMDTFDPKTVYSSIDQFGRYAYGNQPPIALWNLTRLAECLVRLLADDDDKGIEIAQTALGGFAERFNAAYLAKLAAKLGLFTSQPDDQQLSQEFLTALAKGEADFTLAFRRLSDAAVDPSDLGEVRALFADPAAFDEWAPRWRARIAAEPQDATTRQAAMRRVNPAYTPRNHRIEAVIRAAVDRDDFAPFEEILTVLANPFEEKAEFARYAEPPQPHEEVLETFCGT</sequence>
<organism>
    <name type="scientific">Rhodopseudomonas palustris (strain TIE-1)</name>
    <dbReference type="NCBI Taxonomy" id="395960"/>
    <lineage>
        <taxon>Bacteria</taxon>
        <taxon>Pseudomonadati</taxon>
        <taxon>Pseudomonadota</taxon>
        <taxon>Alphaproteobacteria</taxon>
        <taxon>Hyphomicrobiales</taxon>
        <taxon>Nitrobacteraceae</taxon>
        <taxon>Rhodopseudomonas</taxon>
    </lineage>
</organism>
<comment type="function">
    <text evidence="1">Nucleotidyltransferase involved in the post-translational modification of proteins. It can catalyze the addition of adenosine monophosphate (AMP) or uridine monophosphate (UMP) to a protein, resulting in modifications known as AMPylation and UMPylation.</text>
</comment>
<comment type="catalytic activity">
    <reaction evidence="1">
        <text>L-seryl-[protein] + ATP = 3-O-(5'-adenylyl)-L-seryl-[protein] + diphosphate</text>
        <dbReference type="Rhea" id="RHEA:58120"/>
        <dbReference type="Rhea" id="RHEA-COMP:9863"/>
        <dbReference type="Rhea" id="RHEA-COMP:15073"/>
        <dbReference type="ChEBI" id="CHEBI:29999"/>
        <dbReference type="ChEBI" id="CHEBI:30616"/>
        <dbReference type="ChEBI" id="CHEBI:33019"/>
        <dbReference type="ChEBI" id="CHEBI:142516"/>
        <dbReference type="EC" id="2.7.7.108"/>
    </reaction>
</comment>
<comment type="catalytic activity">
    <reaction evidence="1">
        <text>L-threonyl-[protein] + ATP = 3-O-(5'-adenylyl)-L-threonyl-[protein] + diphosphate</text>
        <dbReference type="Rhea" id="RHEA:54292"/>
        <dbReference type="Rhea" id="RHEA-COMP:11060"/>
        <dbReference type="Rhea" id="RHEA-COMP:13847"/>
        <dbReference type="ChEBI" id="CHEBI:30013"/>
        <dbReference type="ChEBI" id="CHEBI:30616"/>
        <dbReference type="ChEBI" id="CHEBI:33019"/>
        <dbReference type="ChEBI" id="CHEBI:138113"/>
        <dbReference type="EC" id="2.7.7.108"/>
    </reaction>
</comment>
<comment type="catalytic activity">
    <reaction evidence="1">
        <text>L-tyrosyl-[protein] + ATP = O-(5'-adenylyl)-L-tyrosyl-[protein] + diphosphate</text>
        <dbReference type="Rhea" id="RHEA:54288"/>
        <dbReference type="Rhea" id="RHEA-COMP:10136"/>
        <dbReference type="Rhea" id="RHEA-COMP:13846"/>
        <dbReference type="ChEBI" id="CHEBI:30616"/>
        <dbReference type="ChEBI" id="CHEBI:33019"/>
        <dbReference type="ChEBI" id="CHEBI:46858"/>
        <dbReference type="ChEBI" id="CHEBI:83624"/>
        <dbReference type="EC" id="2.7.7.108"/>
    </reaction>
</comment>
<comment type="catalytic activity">
    <reaction evidence="1">
        <text>L-histidyl-[protein] + UTP = N(tele)-(5'-uridylyl)-L-histidyl-[protein] + diphosphate</text>
        <dbReference type="Rhea" id="RHEA:83891"/>
        <dbReference type="Rhea" id="RHEA-COMP:9745"/>
        <dbReference type="Rhea" id="RHEA-COMP:20239"/>
        <dbReference type="ChEBI" id="CHEBI:29979"/>
        <dbReference type="ChEBI" id="CHEBI:33019"/>
        <dbReference type="ChEBI" id="CHEBI:46398"/>
        <dbReference type="ChEBI" id="CHEBI:233474"/>
    </reaction>
</comment>
<comment type="catalytic activity">
    <reaction evidence="1">
        <text>L-seryl-[protein] + UTP = O-(5'-uridylyl)-L-seryl-[protein] + diphosphate</text>
        <dbReference type="Rhea" id="RHEA:64604"/>
        <dbReference type="Rhea" id="RHEA-COMP:9863"/>
        <dbReference type="Rhea" id="RHEA-COMP:16635"/>
        <dbReference type="ChEBI" id="CHEBI:29999"/>
        <dbReference type="ChEBI" id="CHEBI:33019"/>
        <dbReference type="ChEBI" id="CHEBI:46398"/>
        <dbReference type="ChEBI" id="CHEBI:156051"/>
    </reaction>
</comment>
<comment type="catalytic activity">
    <reaction evidence="1">
        <text>L-tyrosyl-[protein] + UTP = O-(5'-uridylyl)-L-tyrosyl-[protein] + diphosphate</text>
        <dbReference type="Rhea" id="RHEA:83887"/>
        <dbReference type="Rhea" id="RHEA-COMP:10136"/>
        <dbReference type="Rhea" id="RHEA-COMP:20238"/>
        <dbReference type="ChEBI" id="CHEBI:33019"/>
        <dbReference type="ChEBI" id="CHEBI:46398"/>
        <dbReference type="ChEBI" id="CHEBI:46858"/>
        <dbReference type="ChEBI" id="CHEBI:90602"/>
    </reaction>
</comment>
<comment type="cofactor">
    <cofactor evidence="1">
        <name>Mg(2+)</name>
        <dbReference type="ChEBI" id="CHEBI:18420"/>
    </cofactor>
    <cofactor evidence="1">
        <name>Mn(2+)</name>
        <dbReference type="ChEBI" id="CHEBI:29035"/>
    </cofactor>
</comment>
<comment type="similarity">
    <text evidence="1">Belongs to the SELO family.</text>
</comment>
<proteinExistence type="inferred from homology"/>
<gene>
    <name evidence="1" type="primary">ydiU</name>
    <name evidence="1" type="synonym">selO</name>
    <name type="ordered locus">Rpal_3454</name>
</gene>
<feature type="chain" id="PRO_1000132121" description="Protein nucleotidyltransferase YdiU">
    <location>
        <begin position="1"/>
        <end position="492"/>
    </location>
</feature>
<feature type="active site" description="Proton acceptor" evidence="1">
    <location>
        <position position="250"/>
    </location>
</feature>
<feature type="binding site" evidence="1">
    <location>
        <position position="88"/>
    </location>
    <ligand>
        <name>ATP</name>
        <dbReference type="ChEBI" id="CHEBI:30616"/>
    </ligand>
</feature>
<feature type="binding site" evidence="1">
    <location>
        <position position="90"/>
    </location>
    <ligand>
        <name>ATP</name>
        <dbReference type="ChEBI" id="CHEBI:30616"/>
    </ligand>
</feature>
<feature type="binding site" evidence="1">
    <location>
        <position position="91"/>
    </location>
    <ligand>
        <name>ATP</name>
        <dbReference type="ChEBI" id="CHEBI:30616"/>
    </ligand>
</feature>
<feature type="binding site" evidence="1">
    <location>
        <position position="111"/>
    </location>
    <ligand>
        <name>ATP</name>
        <dbReference type="ChEBI" id="CHEBI:30616"/>
    </ligand>
</feature>
<feature type="binding site" evidence="1">
    <location>
        <position position="123"/>
    </location>
    <ligand>
        <name>ATP</name>
        <dbReference type="ChEBI" id="CHEBI:30616"/>
    </ligand>
</feature>
<feature type="binding site" evidence="1">
    <location>
        <position position="124"/>
    </location>
    <ligand>
        <name>ATP</name>
        <dbReference type="ChEBI" id="CHEBI:30616"/>
    </ligand>
</feature>
<feature type="binding site" evidence="1">
    <location>
        <position position="174"/>
    </location>
    <ligand>
        <name>ATP</name>
        <dbReference type="ChEBI" id="CHEBI:30616"/>
    </ligand>
</feature>
<feature type="binding site" evidence="1">
    <location>
        <position position="181"/>
    </location>
    <ligand>
        <name>ATP</name>
        <dbReference type="ChEBI" id="CHEBI:30616"/>
    </ligand>
</feature>
<feature type="binding site" evidence="1">
    <location>
        <position position="251"/>
    </location>
    <ligand>
        <name>Mg(2+)</name>
        <dbReference type="ChEBI" id="CHEBI:18420"/>
    </ligand>
</feature>
<feature type="binding site" evidence="1">
    <location>
        <position position="260"/>
    </location>
    <ligand>
        <name>ATP</name>
        <dbReference type="ChEBI" id="CHEBI:30616"/>
    </ligand>
</feature>
<feature type="binding site" evidence="1">
    <location>
        <position position="260"/>
    </location>
    <ligand>
        <name>Mg(2+)</name>
        <dbReference type="ChEBI" id="CHEBI:18420"/>
    </ligand>
</feature>
<evidence type="ECO:0000255" key="1">
    <source>
        <dbReference type="HAMAP-Rule" id="MF_00692"/>
    </source>
</evidence>
<dbReference type="EC" id="2.7.7.-" evidence="1"/>
<dbReference type="EC" id="2.7.7.108" evidence="1"/>
<dbReference type="EMBL" id="CP001096">
    <property type="protein sequence ID" value="ACF01955.1"/>
    <property type="molecule type" value="Genomic_DNA"/>
</dbReference>
<dbReference type="RefSeq" id="WP_012496511.1">
    <property type="nucleotide sequence ID" value="NC_011004.1"/>
</dbReference>
<dbReference type="SMR" id="B3Q9Q2"/>
<dbReference type="KEGG" id="rpt:Rpal_3454"/>
<dbReference type="HOGENOM" id="CLU_010245_4_1_5"/>
<dbReference type="OrthoDB" id="9776281at2"/>
<dbReference type="Proteomes" id="UP000001725">
    <property type="component" value="Chromosome"/>
</dbReference>
<dbReference type="GO" id="GO:0070733">
    <property type="term" value="F:AMPylase activity"/>
    <property type="evidence" value="ECO:0007669"/>
    <property type="project" value="TreeGrafter"/>
</dbReference>
<dbReference type="GO" id="GO:0005524">
    <property type="term" value="F:ATP binding"/>
    <property type="evidence" value="ECO:0007669"/>
    <property type="project" value="UniProtKB-UniRule"/>
</dbReference>
<dbReference type="GO" id="GO:0000287">
    <property type="term" value="F:magnesium ion binding"/>
    <property type="evidence" value="ECO:0007669"/>
    <property type="project" value="UniProtKB-UniRule"/>
</dbReference>
<dbReference type="HAMAP" id="MF_00692">
    <property type="entry name" value="YdiU_SelO"/>
    <property type="match status" value="1"/>
</dbReference>
<dbReference type="InterPro" id="IPR003846">
    <property type="entry name" value="SelO"/>
</dbReference>
<dbReference type="NCBIfam" id="NF000658">
    <property type="entry name" value="PRK00029.1"/>
    <property type="match status" value="1"/>
</dbReference>
<dbReference type="PANTHER" id="PTHR32057">
    <property type="entry name" value="PROTEIN ADENYLYLTRANSFERASE SELO, MITOCHONDRIAL"/>
    <property type="match status" value="1"/>
</dbReference>
<dbReference type="PANTHER" id="PTHR32057:SF14">
    <property type="entry name" value="PROTEIN ADENYLYLTRANSFERASE SELO, MITOCHONDRIAL"/>
    <property type="match status" value="1"/>
</dbReference>
<dbReference type="Pfam" id="PF02696">
    <property type="entry name" value="SelO"/>
    <property type="match status" value="1"/>
</dbReference>
<name>SELO_RHOPT</name>
<keyword id="KW-0067">ATP-binding</keyword>
<keyword id="KW-0460">Magnesium</keyword>
<keyword id="KW-0464">Manganese</keyword>
<keyword id="KW-0479">Metal-binding</keyword>
<keyword id="KW-0547">Nucleotide-binding</keyword>
<keyword id="KW-0548">Nucleotidyltransferase</keyword>
<keyword id="KW-0808">Transferase</keyword>